<dbReference type="EC" id="5.1.3.32" evidence="1"/>
<dbReference type="EMBL" id="AM933173">
    <property type="protein sequence ID" value="CAR39171.1"/>
    <property type="molecule type" value="Genomic_DNA"/>
</dbReference>
<dbReference type="RefSeq" id="WP_000619478.1">
    <property type="nucleotide sequence ID" value="NC_011274.1"/>
</dbReference>
<dbReference type="SMR" id="B5RFC8"/>
<dbReference type="KEGG" id="seg:SG3379"/>
<dbReference type="HOGENOM" id="CLU_100689_2_0_6"/>
<dbReference type="UniPathway" id="UPA00125"/>
<dbReference type="Proteomes" id="UP000008321">
    <property type="component" value="Chromosome"/>
</dbReference>
<dbReference type="GO" id="GO:0005737">
    <property type="term" value="C:cytoplasm"/>
    <property type="evidence" value="ECO:0007669"/>
    <property type="project" value="UniProtKB-SubCell"/>
</dbReference>
<dbReference type="GO" id="GO:0062192">
    <property type="term" value="F:L-rhamnose mutarotase activity"/>
    <property type="evidence" value="ECO:0007669"/>
    <property type="project" value="UniProtKB-EC"/>
</dbReference>
<dbReference type="GO" id="GO:0019301">
    <property type="term" value="P:rhamnose catabolic process"/>
    <property type="evidence" value="ECO:0007669"/>
    <property type="project" value="TreeGrafter"/>
</dbReference>
<dbReference type="Gene3D" id="3.30.70.100">
    <property type="match status" value="1"/>
</dbReference>
<dbReference type="HAMAP" id="MF_01663">
    <property type="entry name" value="L_rham_rotase"/>
    <property type="match status" value="1"/>
</dbReference>
<dbReference type="InterPro" id="IPR011008">
    <property type="entry name" value="Dimeric_a/b-barrel"/>
</dbReference>
<dbReference type="InterPro" id="IPR013448">
    <property type="entry name" value="L-rhamnose_mutarotase"/>
</dbReference>
<dbReference type="InterPro" id="IPR008000">
    <property type="entry name" value="Rham/fucose_mutarotase"/>
</dbReference>
<dbReference type="NCBIfam" id="TIGR02625">
    <property type="entry name" value="YiiL_rotase"/>
    <property type="match status" value="1"/>
</dbReference>
<dbReference type="PANTHER" id="PTHR34389">
    <property type="entry name" value="L-RHAMNOSE MUTAROTASE"/>
    <property type="match status" value="1"/>
</dbReference>
<dbReference type="PANTHER" id="PTHR34389:SF2">
    <property type="entry name" value="L-RHAMNOSE MUTAROTASE"/>
    <property type="match status" value="1"/>
</dbReference>
<dbReference type="Pfam" id="PF05336">
    <property type="entry name" value="rhaM"/>
    <property type="match status" value="1"/>
</dbReference>
<dbReference type="SUPFAM" id="SSF54909">
    <property type="entry name" value="Dimeric alpha+beta barrel"/>
    <property type="match status" value="1"/>
</dbReference>
<proteinExistence type="inferred from homology"/>
<accession>B5RFC8</accession>
<protein>
    <recommendedName>
        <fullName evidence="1">L-rhamnose mutarotase</fullName>
        <ecNumber evidence="1">5.1.3.32</ecNumber>
    </recommendedName>
    <alternativeName>
        <fullName evidence="1">Rhamnose 1-epimerase</fullName>
    </alternativeName>
    <alternativeName>
        <fullName evidence="1">Type-3 mutarotase</fullName>
    </alternativeName>
</protein>
<name>RHAM_SALG2</name>
<comment type="function">
    <text evidence="1">Involved in the anomeric conversion of L-rhamnose.</text>
</comment>
<comment type="catalytic activity">
    <reaction evidence="1">
        <text>alpha-L-rhamnose = beta-L-rhamnose</text>
        <dbReference type="Rhea" id="RHEA:25584"/>
        <dbReference type="ChEBI" id="CHEBI:27586"/>
        <dbReference type="ChEBI" id="CHEBI:27907"/>
        <dbReference type="EC" id="5.1.3.32"/>
    </reaction>
</comment>
<comment type="pathway">
    <text evidence="1">Carbohydrate metabolism; L-rhamnose metabolism.</text>
</comment>
<comment type="subunit">
    <text evidence="1">Homodimer.</text>
</comment>
<comment type="subcellular location">
    <subcellularLocation>
        <location evidence="1">Cytoplasm</location>
    </subcellularLocation>
</comment>
<comment type="similarity">
    <text evidence="1">Belongs to the rhamnose mutarotase family.</text>
</comment>
<sequence length="104" mass="12334">MIRKAFVMQVNADAHEEYQRRHNPIWPELEAVLKSHGAHHYAIYLDQERNLLFATVEIESEERWNAVASTDVCQRWWKHMRDVMPANPDNSPVSAELKEVFYLQ</sequence>
<gene>
    <name evidence="1" type="primary">rhaM</name>
    <name type="ordered locus">SG3379</name>
</gene>
<feature type="chain" id="PRO_1000187228" description="L-rhamnose mutarotase">
    <location>
        <begin position="1"/>
        <end position="104"/>
    </location>
</feature>
<feature type="active site" description="Proton donor" evidence="1">
    <location>
        <position position="22"/>
    </location>
</feature>
<feature type="binding site" evidence="1">
    <location>
        <position position="18"/>
    </location>
    <ligand>
        <name>substrate</name>
    </ligand>
</feature>
<feature type="binding site" evidence="1">
    <location>
        <position position="41"/>
    </location>
    <ligand>
        <name>substrate</name>
    </ligand>
</feature>
<feature type="binding site" evidence="1">
    <location>
        <begin position="76"/>
        <end position="77"/>
    </location>
    <ligand>
        <name>substrate</name>
    </ligand>
</feature>
<keyword id="KW-0119">Carbohydrate metabolism</keyword>
<keyword id="KW-0963">Cytoplasm</keyword>
<keyword id="KW-0413">Isomerase</keyword>
<keyword id="KW-0684">Rhamnose metabolism</keyword>
<evidence type="ECO:0000255" key="1">
    <source>
        <dbReference type="HAMAP-Rule" id="MF_01663"/>
    </source>
</evidence>
<reference key="1">
    <citation type="journal article" date="2008" name="Genome Res.">
        <title>Comparative genome analysis of Salmonella enteritidis PT4 and Salmonella gallinarum 287/91 provides insights into evolutionary and host adaptation pathways.</title>
        <authorList>
            <person name="Thomson N.R."/>
            <person name="Clayton D.J."/>
            <person name="Windhorst D."/>
            <person name="Vernikos G."/>
            <person name="Davidson S."/>
            <person name="Churcher C."/>
            <person name="Quail M.A."/>
            <person name="Stevens M."/>
            <person name="Jones M.A."/>
            <person name="Watson M."/>
            <person name="Barron A."/>
            <person name="Layton A."/>
            <person name="Pickard D."/>
            <person name="Kingsley R.A."/>
            <person name="Bignell A."/>
            <person name="Clark L."/>
            <person name="Harris B."/>
            <person name="Ormond D."/>
            <person name="Abdellah Z."/>
            <person name="Brooks K."/>
            <person name="Cherevach I."/>
            <person name="Chillingworth T."/>
            <person name="Woodward J."/>
            <person name="Norberczak H."/>
            <person name="Lord A."/>
            <person name="Arrowsmith C."/>
            <person name="Jagels K."/>
            <person name="Moule S."/>
            <person name="Mungall K."/>
            <person name="Saunders M."/>
            <person name="Whitehead S."/>
            <person name="Chabalgoity J.A."/>
            <person name="Maskell D."/>
            <person name="Humphreys T."/>
            <person name="Roberts M."/>
            <person name="Barrow P.A."/>
            <person name="Dougan G."/>
            <person name="Parkhill J."/>
        </authorList>
    </citation>
    <scope>NUCLEOTIDE SEQUENCE [LARGE SCALE GENOMIC DNA]</scope>
    <source>
        <strain>287/91 / NCTC 13346</strain>
    </source>
</reference>
<organism>
    <name type="scientific">Salmonella gallinarum (strain 287/91 / NCTC 13346)</name>
    <dbReference type="NCBI Taxonomy" id="550538"/>
    <lineage>
        <taxon>Bacteria</taxon>
        <taxon>Pseudomonadati</taxon>
        <taxon>Pseudomonadota</taxon>
        <taxon>Gammaproteobacteria</taxon>
        <taxon>Enterobacterales</taxon>
        <taxon>Enterobacteriaceae</taxon>
        <taxon>Salmonella</taxon>
    </lineage>
</organism>